<evidence type="ECO:0000305" key="1"/>
<sequence length="207" mass="24284">MYIPKYFKVTNAEEIWNFVQENSFGTVVTTEQGKPIATHLPLGFNKKDDHYYITGHFAYGNPQWRTFEACEDVLVMFQGPHAYISSSWYSRENVPTWNYQAVHMYGKASMLEKDELAEELTIMLEKYEKHRDNPVLWDKLSPKLLESELKGIVGFKIKVEDIQAAYKLSQNRNETDYMNVIEQLQNEENPNAKQMAELMEDKLKKQI</sequence>
<reference key="1">
    <citation type="journal article" date="1990" name="J. Bacteriol.">
        <title>A novel Bacillus subtilis gene involved in negative control of sporulation and degradative-enzyme production.</title>
        <authorList>
            <person name="Honjo M."/>
            <person name="Nakayama A."/>
            <person name="Fukazawa K."/>
            <person name="Kawamura K."/>
            <person name="Ando K."/>
            <person name="Hori M."/>
            <person name="Furutani Y."/>
        </authorList>
    </citation>
    <scope>NUCLEOTIDE SEQUENCE [GENOMIC DNA]</scope>
    <scope>PROTEIN SEQUENCE OF 1-5</scope>
    <source>
        <strain>168 / DB104</strain>
    </source>
</reference>
<reference key="2">
    <citation type="journal article" date="1997" name="Nature">
        <title>The complete genome sequence of the Gram-positive bacterium Bacillus subtilis.</title>
        <authorList>
            <person name="Kunst F."/>
            <person name="Ogasawara N."/>
            <person name="Moszer I."/>
            <person name="Albertini A.M."/>
            <person name="Alloni G."/>
            <person name="Azevedo V."/>
            <person name="Bertero M.G."/>
            <person name="Bessieres P."/>
            <person name="Bolotin A."/>
            <person name="Borchert S."/>
            <person name="Borriss R."/>
            <person name="Boursier L."/>
            <person name="Brans A."/>
            <person name="Braun M."/>
            <person name="Brignell S.C."/>
            <person name="Bron S."/>
            <person name="Brouillet S."/>
            <person name="Bruschi C.V."/>
            <person name="Caldwell B."/>
            <person name="Capuano V."/>
            <person name="Carter N.M."/>
            <person name="Choi S.-K."/>
            <person name="Codani J.-J."/>
            <person name="Connerton I.F."/>
            <person name="Cummings N.J."/>
            <person name="Daniel R.A."/>
            <person name="Denizot F."/>
            <person name="Devine K.M."/>
            <person name="Duesterhoeft A."/>
            <person name="Ehrlich S.D."/>
            <person name="Emmerson P.T."/>
            <person name="Entian K.-D."/>
            <person name="Errington J."/>
            <person name="Fabret C."/>
            <person name="Ferrari E."/>
            <person name="Foulger D."/>
            <person name="Fritz C."/>
            <person name="Fujita M."/>
            <person name="Fujita Y."/>
            <person name="Fuma S."/>
            <person name="Galizzi A."/>
            <person name="Galleron N."/>
            <person name="Ghim S.-Y."/>
            <person name="Glaser P."/>
            <person name="Goffeau A."/>
            <person name="Golightly E.J."/>
            <person name="Grandi G."/>
            <person name="Guiseppi G."/>
            <person name="Guy B.J."/>
            <person name="Haga K."/>
            <person name="Haiech J."/>
            <person name="Harwood C.R."/>
            <person name="Henaut A."/>
            <person name="Hilbert H."/>
            <person name="Holsappel S."/>
            <person name="Hosono S."/>
            <person name="Hullo M.-F."/>
            <person name="Itaya M."/>
            <person name="Jones L.-M."/>
            <person name="Joris B."/>
            <person name="Karamata D."/>
            <person name="Kasahara Y."/>
            <person name="Klaerr-Blanchard M."/>
            <person name="Klein C."/>
            <person name="Kobayashi Y."/>
            <person name="Koetter P."/>
            <person name="Koningstein G."/>
            <person name="Krogh S."/>
            <person name="Kumano M."/>
            <person name="Kurita K."/>
            <person name="Lapidus A."/>
            <person name="Lardinois S."/>
            <person name="Lauber J."/>
            <person name="Lazarevic V."/>
            <person name="Lee S.-M."/>
            <person name="Levine A."/>
            <person name="Liu H."/>
            <person name="Masuda S."/>
            <person name="Mauel C."/>
            <person name="Medigue C."/>
            <person name="Medina N."/>
            <person name="Mellado R.P."/>
            <person name="Mizuno M."/>
            <person name="Moestl D."/>
            <person name="Nakai S."/>
            <person name="Noback M."/>
            <person name="Noone D."/>
            <person name="O'Reilly M."/>
            <person name="Ogawa K."/>
            <person name="Ogiwara A."/>
            <person name="Oudega B."/>
            <person name="Park S.-H."/>
            <person name="Parro V."/>
            <person name="Pohl T.M."/>
            <person name="Portetelle D."/>
            <person name="Porwollik S."/>
            <person name="Prescott A.M."/>
            <person name="Presecan E."/>
            <person name="Pujic P."/>
            <person name="Purnelle B."/>
            <person name="Rapoport G."/>
            <person name="Rey M."/>
            <person name="Reynolds S."/>
            <person name="Rieger M."/>
            <person name="Rivolta C."/>
            <person name="Rocha E."/>
            <person name="Roche B."/>
            <person name="Rose M."/>
            <person name="Sadaie Y."/>
            <person name="Sato T."/>
            <person name="Scanlan E."/>
            <person name="Schleich S."/>
            <person name="Schroeter R."/>
            <person name="Scoffone F."/>
            <person name="Sekiguchi J."/>
            <person name="Sekowska A."/>
            <person name="Seror S.J."/>
            <person name="Serror P."/>
            <person name="Shin B.-S."/>
            <person name="Soldo B."/>
            <person name="Sorokin A."/>
            <person name="Tacconi E."/>
            <person name="Takagi T."/>
            <person name="Takahashi H."/>
            <person name="Takemaru K."/>
            <person name="Takeuchi M."/>
            <person name="Tamakoshi A."/>
            <person name="Tanaka T."/>
            <person name="Terpstra P."/>
            <person name="Tognoni A."/>
            <person name="Tosato V."/>
            <person name="Uchiyama S."/>
            <person name="Vandenbol M."/>
            <person name="Vannier F."/>
            <person name="Vassarotti A."/>
            <person name="Viari A."/>
            <person name="Wambutt R."/>
            <person name="Wedler E."/>
            <person name="Wedler H."/>
            <person name="Weitzenegger T."/>
            <person name="Winters P."/>
            <person name="Wipat A."/>
            <person name="Yamamoto H."/>
            <person name="Yamane K."/>
            <person name="Yasumoto K."/>
            <person name="Yata K."/>
            <person name="Yoshida K."/>
            <person name="Yoshikawa H.-F."/>
            <person name="Zumstein E."/>
            <person name="Yoshikawa H."/>
            <person name="Danchin A."/>
        </authorList>
    </citation>
    <scope>NUCLEOTIDE SEQUENCE [LARGE SCALE GENOMIC DNA]</scope>
    <source>
        <strain>168</strain>
    </source>
</reference>
<reference key="3">
    <citation type="journal article" date="2009" name="Microbiology">
        <title>From a consortium sequence to a unified sequence: the Bacillus subtilis 168 reference genome a decade later.</title>
        <authorList>
            <person name="Barbe V."/>
            <person name="Cruveiller S."/>
            <person name="Kunst F."/>
            <person name="Lenoble P."/>
            <person name="Meurice G."/>
            <person name="Sekowska A."/>
            <person name="Vallenet D."/>
            <person name="Wang T."/>
            <person name="Moszer I."/>
            <person name="Medigue C."/>
            <person name="Danchin A."/>
        </authorList>
    </citation>
    <scope>SEQUENCE REVISION TO 126-134</scope>
</reference>
<reference key="4">
    <citation type="submission" date="1997-04" db="EMBL/GenBank/DDBJ databases">
        <authorList>
            <person name="Oudega B."/>
            <person name="Koningstein G."/>
            <person name="de Sales Ramon M."/>
            <person name="Rodrigues L."/>
        </authorList>
    </citation>
    <scope>NUCLEOTIDE SEQUENCE [GENOMIC DNA] OF 76-207</scope>
    <source>
        <strain>168</strain>
    </source>
</reference>
<gene>
    <name type="primary">paiB</name>
    <name type="synonym">yumE</name>
    <name type="ordered locus">BSU32140</name>
</gene>
<accession>P21341</accession>
<accession>O05270</accession>
<proteinExistence type="evidence at protein level"/>
<feature type="chain" id="PRO_0000058176" description="Protease synthase and sporulation protein PAI 2">
    <location>
        <begin position="1"/>
        <end position="207"/>
    </location>
</feature>
<feature type="sequence conflict" description="In Ref. 4; CAB07956." evidence="1" ref="4">
    <original>KYEKHRDNP</original>
    <variation>QKTPTQAFS</variation>
    <location>
        <begin position="126"/>
        <end position="134"/>
    </location>
</feature>
<name>PAIB_BACSU</name>
<keyword id="KW-0903">Direct protein sequencing</keyword>
<keyword id="KW-1185">Reference proteome</keyword>
<keyword id="KW-0749">Sporulation</keyword>
<protein>
    <recommendedName>
        <fullName>Protease synthase and sporulation protein PAI 2</fullName>
    </recommendedName>
</protein>
<organism>
    <name type="scientific">Bacillus subtilis (strain 168)</name>
    <dbReference type="NCBI Taxonomy" id="224308"/>
    <lineage>
        <taxon>Bacteria</taxon>
        <taxon>Bacillati</taxon>
        <taxon>Bacillota</taxon>
        <taxon>Bacilli</taxon>
        <taxon>Bacillales</taxon>
        <taxon>Bacillaceae</taxon>
        <taxon>Bacillus</taxon>
    </lineage>
</organism>
<dbReference type="EMBL" id="M36471">
    <property type="protein sequence ID" value="AAA22639.1"/>
    <property type="molecule type" value="Genomic_DNA"/>
</dbReference>
<dbReference type="EMBL" id="AL009126">
    <property type="protein sequence ID" value="CAB15204.2"/>
    <property type="molecule type" value="Genomic_DNA"/>
</dbReference>
<dbReference type="EMBL" id="Z93939">
    <property type="protein sequence ID" value="CAB07956.1"/>
    <property type="molecule type" value="Genomic_DNA"/>
</dbReference>
<dbReference type="PIR" id="B35145">
    <property type="entry name" value="B35145"/>
</dbReference>
<dbReference type="PIR" id="F69671">
    <property type="entry name" value="F69671"/>
</dbReference>
<dbReference type="RefSeq" id="NP_391094.2">
    <property type="nucleotide sequence ID" value="NC_000964.3"/>
</dbReference>
<dbReference type="RefSeq" id="WP_003244329.1">
    <property type="nucleotide sequence ID" value="NZ_OZ025638.1"/>
</dbReference>
<dbReference type="SMR" id="P21341"/>
<dbReference type="FunCoup" id="P21341">
    <property type="interactions" value="27"/>
</dbReference>
<dbReference type="STRING" id="224308.BSU32140"/>
<dbReference type="PaxDb" id="224308-BSU32140"/>
<dbReference type="EnsemblBacteria" id="CAB15204">
    <property type="protein sequence ID" value="CAB15204"/>
    <property type="gene ID" value="BSU_32140"/>
</dbReference>
<dbReference type="GeneID" id="936588"/>
<dbReference type="KEGG" id="bsu:BSU32140"/>
<dbReference type="PATRIC" id="fig|224308.179.peg.3480"/>
<dbReference type="eggNOG" id="COG2808">
    <property type="taxonomic scope" value="Bacteria"/>
</dbReference>
<dbReference type="InParanoid" id="P21341"/>
<dbReference type="OrthoDB" id="9794948at2"/>
<dbReference type="PhylomeDB" id="P21341"/>
<dbReference type="BioCyc" id="BSUB:BSU32140-MONOMER"/>
<dbReference type="Proteomes" id="UP000001570">
    <property type="component" value="Chromosome"/>
</dbReference>
<dbReference type="GO" id="GO:0030435">
    <property type="term" value="P:sporulation resulting in formation of a cellular spore"/>
    <property type="evidence" value="ECO:0007669"/>
    <property type="project" value="UniProtKB-KW"/>
</dbReference>
<dbReference type="Gene3D" id="2.30.110.10">
    <property type="entry name" value="Electron Transport, Fmn-binding Protein, Chain A"/>
    <property type="match status" value="1"/>
</dbReference>
<dbReference type="InterPro" id="IPR012349">
    <property type="entry name" value="Split_barrel_FMN-bd"/>
</dbReference>
<dbReference type="InterPro" id="IPR007396">
    <property type="entry name" value="TR_PAI2-type"/>
</dbReference>
<dbReference type="PANTHER" id="PTHR35802">
    <property type="entry name" value="PROTEASE SYNTHASE AND SPORULATION PROTEIN PAI 2"/>
    <property type="match status" value="1"/>
</dbReference>
<dbReference type="PANTHER" id="PTHR35802:SF1">
    <property type="entry name" value="PROTEASE SYNTHASE AND SPORULATION PROTEIN PAI 2"/>
    <property type="match status" value="1"/>
</dbReference>
<dbReference type="Pfam" id="PF04299">
    <property type="entry name" value="FMN_bind_2"/>
    <property type="match status" value="1"/>
</dbReference>
<dbReference type="PIRSF" id="PIRSF010372">
    <property type="entry name" value="PaiB"/>
    <property type="match status" value="1"/>
</dbReference>
<dbReference type="SUPFAM" id="SSF50475">
    <property type="entry name" value="FMN-binding split barrel"/>
    <property type="match status" value="1"/>
</dbReference>
<comment type="function">
    <text>Involved in the reduction of extracellular and cell-associated protease levels, as well as in the reduced levels of alpha-amylase, levansucrase, alkaline phosphatase and sporulation inhibition, when present in high copy number.</text>
</comment>
<comment type="similarity">
    <text evidence="1">Belongs to the PaiB family.</text>
</comment>